<dbReference type="EC" id="3.4.21.89" evidence="1"/>
<dbReference type="EMBL" id="ADXC01000044">
    <property type="protein sequence ID" value="EGA78360.1"/>
    <property type="molecule type" value="Genomic_DNA"/>
</dbReference>
<dbReference type="SMR" id="E7LVX4"/>
<dbReference type="MEROPS" id="S26.010"/>
<dbReference type="GlyCosmos" id="E7LVX4">
    <property type="glycosylation" value="1 site, No reported glycans"/>
</dbReference>
<dbReference type="HOGENOM" id="CLU_089996_0_0_1"/>
<dbReference type="OMA" id="ILMNEYP"/>
<dbReference type="GO" id="GO:0005787">
    <property type="term" value="C:signal peptidase complex"/>
    <property type="evidence" value="ECO:0007669"/>
    <property type="project" value="TreeGrafter"/>
</dbReference>
<dbReference type="GO" id="GO:0004252">
    <property type="term" value="F:serine-type endopeptidase activity"/>
    <property type="evidence" value="ECO:0007669"/>
    <property type="project" value="UniProtKB-EC"/>
</dbReference>
<dbReference type="GO" id="GO:0006465">
    <property type="term" value="P:signal peptide processing"/>
    <property type="evidence" value="ECO:0007669"/>
    <property type="project" value="InterPro"/>
</dbReference>
<dbReference type="CDD" id="cd06462">
    <property type="entry name" value="Peptidase_S24_S26"/>
    <property type="match status" value="1"/>
</dbReference>
<dbReference type="InterPro" id="IPR036286">
    <property type="entry name" value="LexA/Signal_pep-like_sf"/>
</dbReference>
<dbReference type="InterPro" id="IPR019758">
    <property type="entry name" value="Pept_S26A_signal_pept_1_CS"/>
</dbReference>
<dbReference type="InterPro" id="IPR019756">
    <property type="entry name" value="Pept_S26A_signal_pept_1_Ser-AS"/>
</dbReference>
<dbReference type="InterPro" id="IPR015927">
    <property type="entry name" value="Peptidase_S24_S26A/B/C"/>
</dbReference>
<dbReference type="InterPro" id="IPR001733">
    <property type="entry name" value="Peptidase_S26B"/>
</dbReference>
<dbReference type="NCBIfam" id="TIGR02228">
    <property type="entry name" value="sigpep_I_arch"/>
    <property type="match status" value="1"/>
</dbReference>
<dbReference type="PANTHER" id="PTHR10806">
    <property type="entry name" value="SIGNAL PEPTIDASE COMPLEX CATALYTIC SUBUNIT SEC11"/>
    <property type="match status" value="1"/>
</dbReference>
<dbReference type="PANTHER" id="PTHR10806:SF6">
    <property type="entry name" value="SIGNAL PEPTIDASE COMPLEX CATALYTIC SUBUNIT SEC11"/>
    <property type="match status" value="1"/>
</dbReference>
<dbReference type="Pfam" id="PF00717">
    <property type="entry name" value="Peptidase_S24"/>
    <property type="match status" value="1"/>
</dbReference>
<dbReference type="PRINTS" id="PR00728">
    <property type="entry name" value="SIGNALPTASE"/>
</dbReference>
<dbReference type="SUPFAM" id="SSF51306">
    <property type="entry name" value="LexA/Signal peptidase"/>
    <property type="match status" value="1"/>
</dbReference>
<dbReference type="PROSITE" id="PS00501">
    <property type="entry name" value="SPASE_I_1"/>
    <property type="match status" value="1"/>
</dbReference>
<dbReference type="PROSITE" id="PS00761">
    <property type="entry name" value="SPASE_I_3"/>
    <property type="match status" value="1"/>
</dbReference>
<name>SEC11_YEASV</name>
<evidence type="ECO:0000250" key="1">
    <source>
        <dbReference type="UniProtKB" id="P15367"/>
    </source>
</evidence>
<evidence type="ECO:0000250" key="2">
    <source>
        <dbReference type="UniProtKB" id="P67812"/>
    </source>
</evidence>
<evidence type="ECO:0000255" key="3"/>
<evidence type="ECO:0000305" key="4"/>
<feature type="chain" id="PRO_0000412360" description="Signal peptidase complex catalytic subunit SEC11">
    <location>
        <begin position="1"/>
        <end position="167"/>
    </location>
</feature>
<feature type="topological domain" description="Cytoplasmic" evidence="3">
    <location>
        <begin position="1"/>
        <end position="9"/>
    </location>
</feature>
<feature type="transmembrane region" description="Helical; Signal-anchor for type II membrane protein" evidence="3">
    <location>
        <begin position="10"/>
        <end position="30"/>
    </location>
</feature>
<feature type="topological domain" description="Lumenal" evidence="3">
    <location>
        <begin position="31"/>
        <end position="167"/>
    </location>
</feature>
<feature type="region of interest" description="C-terminal short (CTS) helix" evidence="2">
    <location>
        <begin position="153"/>
        <end position="164"/>
    </location>
</feature>
<feature type="active site" description="Charge relay system" evidence="1">
    <location>
        <position position="44"/>
    </location>
</feature>
<feature type="active site" description="Charge relay system" evidence="1">
    <location>
        <position position="83"/>
    </location>
</feature>
<feature type="active site" description="Charge relay system" evidence="1">
    <location>
        <position position="109"/>
    </location>
</feature>
<feature type="glycosylation site" description="N-linked (GlcNAc...) asparagine" evidence="3">
    <location>
        <position position="121"/>
    </location>
</feature>
<accession>E7LVX4</accession>
<sequence length="167" mass="18762">MNLRFELQKLLNVCFLFASAYMFWQGLAIATNSASPIVVVLSGSMEPAFQRGDILFLWNRNTFNQVGDVVVYEVEGKQIPIVHRVLRQHNNHADKQFLLTKGDNNAGNDISLYANKKIYLNKSKEIVGTVKGYFPQLGYITIWISENKYAKFALLGMLGLSALLGGE</sequence>
<comment type="function">
    <text evidence="1 2">Catalytic component of the signal peptidase complex (SPC) which catalyzes the cleavage of N-terminal signal sequences from nascent proteins as they are translocated into the lumen of the endoplasmic reticulum (By similarity). Specifically cleaves N-terminal signal peptides that contain a hydrophobic alpha-helix (h-region) shorter than 18-20 amino acids (By similarity).</text>
</comment>
<comment type="catalytic activity">
    <reaction evidence="1">
        <text>Cleavage of hydrophobic, N-terminal signal or leader sequences from secreted and periplasmic proteins.</text>
        <dbReference type="EC" id="3.4.21.89"/>
    </reaction>
</comment>
<comment type="subunit">
    <text evidence="1 2">Component of the signal peptidase complex (SPC) composed of a catalytic subunit SEC11 and three accessory subunits SPC1, SPC2 and SPC3 (By similarity). The complex induces a local thinning of the ER membrane which is used to measure the length of the signal peptide (SP) h-region of protein substrates. This ensures the selectivity of the complex towards h-regions shorter than 18-20 amino acids (By similarity). SPC associates with the translocon complex (By similarity).</text>
</comment>
<comment type="subcellular location">
    <subcellularLocation>
        <location evidence="1">Endoplasmic reticulum membrane</location>
        <topology evidence="1">Single-pass type II membrane protein</topology>
    </subcellularLocation>
</comment>
<comment type="domain">
    <text evidence="2">The C-terminal short (CTS) helix is essential for catalytic activity. It may be accommodated as a transmembrane helix in the thinned membrane environment of the complex, similarly to the signal peptide in the complex substrates.</text>
</comment>
<comment type="similarity">
    <text evidence="4">Belongs to the peptidase S26B family.</text>
</comment>
<protein>
    <recommendedName>
        <fullName>Signal peptidase complex catalytic subunit SEC11</fullName>
        <ecNumber evidence="1">3.4.21.89</ecNumber>
    </recommendedName>
    <alternativeName>
        <fullName>Secretory protein 11</fullName>
    </alternativeName>
    <alternativeName>
        <fullName>Signal peptidase I</fullName>
    </alternativeName>
</protein>
<organism>
    <name type="scientific">Saccharomyces cerevisiae (strain VIN 13)</name>
    <name type="common">Baker's yeast</name>
    <dbReference type="NCBI Taxonomy" id="764099"/>
    <lineage>
        <taxon>Eukaryota</taxon>
        <taxon>Fungi</taxon>
        <taxon>Dikarya</taxon>
        <taxon>Ascomycota</taxon>
        <taxon>Saccharomycotina</taxon>
        <taxon>Saccharomycetes</taxon>
        <taxon>Saccharomycetales</taxon>
        <taxon>Saccharomycetaceae</taxon>
        <taxon>Saccharomyces</taxon>
    </lineage>
</organism>
<keyword id="KW-0256">Endoplasmic reticulum</keyword>
<keyword id="KW-0325">Glycoprotein</keyword>
<keyword id="KW-0378">Hydrolase</keyword>
<keyword id="KW-0472">Membrane</keyword>
<keyword id="KW-0645">Protease</keyword>
<keyword id="KW-0735">Signal-anchor</keyword>
<keyword id="KW-0812">Transmembrane</keyword>
<keyword id="KW-1133">Transmembrane helix</keyword>
<proteinExistence type="inferred from homology"/>
<gene>
    <name type="primary">SEC11</name>
    <name type="ORF">VIN13_2415</name>
</gene>
<reference key="1">
    <citation type="journal article" date="2011" name="PLoS Genet.">
        <title>Whole-genome comparison reveals novel genetic elements that characterize the genome of industrial strains of Saccharomyces cerevisiae.</title>
        <authorList>
            <person name="Borneman A.R."/>
            <person name="Desany B.A."/>
            <person name="Riches D."/>
            <person name="Affourtit J.P."/>
            <person name="Forgan A.H."/>
            <person name="Pretorius I.S."/>
            <person name="Egholm M."/>
            <person name="Chambers P.J."/>
        </authorList>
    </citation>
    <scope>NUCLEOTIDE SEQUENCE [LARGE SCALE GENOMIC DNA]</scope>
    <source>
        <strain>VIN 13</strain>
    </source>
</reference>